<accession>Q5ZJX0</accession>
<accession>E1BY15</accession>
<gene>
    <name type="primary">SLC66A1</name>
    <name type="synonym">PQLC2</name>
    <name type="ORF">RCJMB04_14o18</name>
</gene>
<evidence type="ECO:0000250" key="1"/>
<evidence type="ECO:0000255" key="2"/>
<evidence type="ECO:0000305" key="3"/>
<proteinExistence type="evidence at transcript level"/>
<comment type="function">
    <text evidence="1">Amino acid transporter that specifically mediates the pH-dependent export of the cationic amino acids arginine, histidine and lysine from lysosomes.</text>
</comment>
<comment type="subcellular location">
    <subcellularLocation>
        <location evidence="1">Lysosome membrane</location>
        <topology evidence="1">Multi-pass membrane protein</topology>
    </subcellularLocation>
</comment>
<comment type="domain">
    <text evidence="1">The di-leucine motif mediates lysosomal localization.</text>
</comment>
<comment type="similarity">
    <text evidence="3">Belongs to the laat-1 family.</text>
</comment>
<dbReference type="EMBL" id="AJ720314">
    <property type="protein sequence ID" value="CAG31973.1"/>
    <property type="molecule type" value="mRNA"/>
</dbReference>
<dbReference type="EMBL" id="AADN02040695">
    <property type="status" value="NOT_ANNOTATED_CDS"/>
    <property type="molecule type" value="Genomic_DNA"/>
</dbReference>
<dbReference type="EMBL" id="AADN02040696">
    <property type="status" value="NOT_ANNOTATED_CDS"/>
    <property type="molecule type" value="Genomic_DNA"/>
</dbReference>
<dbReference type="EMBL" id="AADN02040697">
    <property type="status" value="NOT_ANNOTATED_CDS"/>
    <property type="molecule type" value="Genomic_DNA"/>
</dbReference>
<dbReference type="RefSeq" id="NP_001006304.1">
    <property type="nucleotide sequence ID" value="NM_001006304.1"/>
</dbReference>
<dbReference type="FunCoup" id="Q5ZJX0">
    <property type="interactions" value="1218"/>
</dbReference>
<dbReference type="STRING" id="9031.ENSGALP00000055267"/>
<dbReference type="GlyCosmos" id="Q5ZJX0">
    <property type="glycosylation" value="1 site, No reported glycans"/>
</dbReference>
<dbReference type="GlyGen" id="Q5ZJX0">
    <property type="glycosylation" value="1 site"/>
</dbReference>
<dbReference type="PaxDb" id="9031-ENSGALP00000006392"/>
<dbReference type="GeneID" id="419472"/>
<dbReference type="KEGG" id="gga:419472"/>
<dbReference type="CTD" id="419472"/>
<dbReference type="VEuPathDB" id="HostDB:geneid_419472"/>
<dbReference type="eggNOG" id="KOG2913">
    <property type="taxonomic scope" value="Eukaryota"/>
</dbReference>
<dbReference type="HOGENOM" id="CLU_019699_3_0_1"/>
<dbReference type="InParanoid" id="Q5ZJX0"/>
<dbReference type="OrthoDB" id="8048523at2759"/>
<dbReference type="PhylomeDB" id="Q5ZJX0"/>
<dbReference type="Reactome" id="R-GGA-5223345">
    <property type="pathway name" value="Miscellaneous transport and binding events"/>
</dbReference>
<dbReference type="PRO" id="PR:Q5ZJX0"/>
<dbReference type="Proteomes" id="UP000000539">
    <property type="component" value="Chromosome 21"/>
</dbReference>
<dbReference type="Bgee" id="ENSGALG00000033204">
    <property type="expression patterns" value="Expressed in granulocyte and 13 other cell types or tissues"/>
</dbReference>
<dbReference type="GO" id="GO:0005765">
    <property type="term" value="C:lysosomal membrane"/>
    <property type="evidence" value="ECO:0000250"/>
    <property type="project" value="UniProtKB"/>
</dbReference>
<dbReference type="GO" id="GO:0031090">
    <property type="term" value="C:organelle membrane"/>
    <property type="evidence" value="ECO:0000250"/>
    <property type="project" value="UniProtKB"/>
</dbReference>
<dbReference type="GO" id="GO:0061459">
    <property type="term" value="F:L-arginine transmembrane transporter activity"/>
    <property type="evidence" value="ECO:0000250"/>
    <property type="project" value="UniProtKB"/>
</dbReference>
<dbReference type="GO" id="GO:0015189">
    <property type="term" value="F:L-lysine transmembrane transporter activity"/>
    <property type="evidence" value="ECO:0000250"/>
    <property type="project" value="UniProtKB"/>
</dbReference>
<dbReference type="GO" id="GO:0080144">
    <property type="term" value="P:intracellular amino acid homeostasis"/>
    <property type="evidence" value="ECO:0000250"/>
    <property type="project" value="UniProtKB"/>
</dbReference>
<dbReference type="GO" id="GO:1903826">
    <property type="term" value="P:L-arginine transmembrane transport"/>
    <property type="evidence" value="ECO:0000250"/>
    <property type="project" value="UniProtKB"/>
</dbReference>
<dbReference type="GO" id="GO:0015819">
    <property type="term" value="P:lysine transport"/>
    <property type="evidence" value="ECO:0000250"/>
    <property type="project" value="UniProtKB"/>
</dbReference>
<dbReference type="FunFam" id="1.20.1280.290:FF:000017">
    <property type="entry name" value="lysosomal amino acid transporter 1 homolog"/>
    <property type="match status" value="1"/>
</dbReference>
<dbReference type="FunFam" id="1.20.1280.290:FF:000009">
    <property type="entry name" value="PQ loop repeat family protein"/>
    <property type="match status" value="1"/>
</dbReference>
<dbReference type="Gene3D" id="1.20.1280.290">
    <property type="match status" value="2"/>
</dbReference>
<dbReference type="InterPro" id="IPR051415">
    <property type="entry name" value="LAAT-1"/>
</dbReference>
<dbReference type="InterPro" id="IPR006603">
    <property type="entry name" value="PQ-loop_rpt"/>
</dbReference>
<dbReference type="PANTHER" id="PTHR16201:SF36">
    <property type="entry name" value="LYSOSOMAL AMINO ACID TRANSPORTER 1 HOMOLOG"/>
    <property type="match status" value="1"/>
</dbReference>
<dbReference type="PANTHER" id="PTHR16201">
    <property type="entry name" value="SEVEN TRANSMEMBRANE PROTEIN 1-RELATED"/>
    <property type="match status" value="1"/>
</dbReference>
<dbReference type="Pfam" id="PF04193">
    <property type="entry name" value="PQ-loop"/>
    <property type="match status" value="2"/>
</dbReference>
<dbReference type="SMART" id="SM00679">
    <property type="entry name" value="CTNS"/>
    <property type="match status" value="2"/>
</dbReference>
<sequence length="303" mass="32167">MAEGLRAPPPPGNGSECPDGARWVLRLLGECARDGRDVGSALLGLLSIGCFAAAALPQFYQACKTGIMDRALSIYFLLGWLGGDLLNLIGSFLANQLPLQVYTAVYYVLADLVMLSLYGYYKAKNWGTGATASINAACLFCLLGTATTLTVLSHDTGPAPNPAAFGGRSLLSLGLEGPGPEPISKTEIIGFAIGSISSVLYLCSRLPQIYTNYRRKSTAGVSFLLFALVMLGNLLYGTSVLLKNPEPGQSEGDYILHHLPWLIGSLGVLSLDVIISFQFLAYRTGQPSAGEEREALLAEHGDS</sequence>
<name>LAAT1_CHICK</name>
<keyword id="KW-0029">Amino-acid transport</keyword>
<keyword id="KW-0325">Glycoprotein</keyword>
<keyword id="KW-0458">Lysosome</keyword>
<keyword id="KW-0472">Membrane</keyword>
<keyword id="KW-1185">Reference proteome</keyword>
<keyword id="KW-0677">Repeat</keyword>
<keyword id="KW-0812">Transmembrane</keyword>
<keyword id="KW-1133">Transmembrane helix</keyword>
<keyword id="KW-0813">Transport</keyword>
<organism>
    <name type="scientific">Gallus gallus</name>
    <name type="common">Chicken</name>
    <dbReference type="NCBI Taxonomy" id="9031"/>
    <lineage>
        <taxon>Eukaryota</taxon>
        <taxon>Metazoa</taxon>
        <taxon>Chordata</taxon>
        <taxon>Craniata</taxon>
        <taxon>Vertebrata</taxon>
        <taxon>Euteleostomi</taxon>
        <taxon>Archelosauria</taxon>
        <taxon>Archosauria</taxon>
        <taxon>Dinosauria</taxon>
        <taxon>Saurischia</taxon>
        <taxon>Theropoda</taxon>
        <taxon>Coelurosauria</taxon>
        <taxon>Aves</taxon>
        <taxon>Neognathae</taxon>
        <taxon>Galloanserae</taxon>
        <taxon>Galliformes</taxon>
        <taxon>Phasianidae</taxon>
        <taxon>Phasianinae</taxon>
        <taxon>Gallus</taxon>
    </lineage>
</organism>
<reference key="1">
    <citation type="journal article" date="2005" name="Genome Biol.">
        <title>Full-length cDNAs from chicken bursal lymphocytes to facilitate gene function analysis.</title>
        <authorList>
            <person name="Caldwell R.B."/>
            <person name="Kierzek A.M."/>
            <person name="Arakawa H."/>
            <person name="Bezzubov Y."/>
            <person name="Zaim J."/>
            <person name="Fiedler P."/>
            <person name="Kutter S."/>
            <person name="Blagodatski A."/>
            <person name="Kostovska D."/>
            <person name="Koter M."/>
            <person name="Plachy J."/>
            <person name="Carninci P."/>
            <person name="Hayashizaki Y."/>
            <person name="Buerstedde J.-M."/>
        </authorList>
    </citation>
    <scope>NUCLEOTIDE SEQUENCE [LARGE SCALE MRNA]</scope>
    <source>
        <strain>CB</strain>
        <tissue>Bursa of Fabricius</tissue>
    </source>
</reference>
<reference key="2">
    <citation type="journal article" date="2004" name="Nature">
        <title>Sequence and comparative analysis of the chicken genome provide unique perspectives on vertebrate evolution.</title>
        <authorList>
            <person name="Hillier L.W."/>
            <person name="Miller W."/>
            <person name="Birney E."/>
            <person name="Warren W."/>
            <person name="Hardison R.C."/>
            <person name="Ponting C.P."/>
            <person name="Bork P."/>
            <person name="Burt D.W."/>
            <person name="Groenen M.A.M."/>
            <person name="Delany M.E."/>
            <person name="Dodgson J.B."/>
            <person name="Chinwalla A.T."/>
            <person name="Cliften P.F."/>
            <person name="Clifton S.W."/>
            <person name="Delehaunty K.D."/>
            <person name="Fronick C."/>
            <person name="Fulton R.S."/>
            <person name="Graves T.A."/>
            <person name="Kremitzki C."/>
            <person name="Layman D."/>
            <person name="Magrini V."/>
            <person name="McPherson J.D."/>
            <person name="Miner T.L."/>
            <person name="Minx P."/>
            <person name="Nash W.E."/>
            <person name="Nhan M.N."/>
            <person name="Nelson J.O."/>
            <person name="Oddy L.G."/>
            <person name="Pohl C.S."/>
            <person name="Randall-Maher J."/>
            <person name="Smith S.M."/>
            <person name="Wallis J.W."/>
            <person name="Yang S.-P."/>
            <person name="Romanov M.N."/>
            <person name="Rondelli C.M."/>
            <person name="Paton B."/>
            <person name="Smith J."/>
            <person name="Morrice D."/>
            <person name="Daniels L."/>
            <person name="Tempest H.G."/>
            <person name="Robertson L."/>
            <person name="Masabanda J.S."/>
            <person name="Griffin D.K."/>
            <person name="Vignal A."/>
            <person name="Fillon V."/>
            <person name="Jacobbson L."/>
            <person name="Kerje S."/>
            <person name="Andersson L."/>
            <person name="Crooijmans R.P."/>
            <person name="Aerts J."/>
            <person name="van der Poel J.J."/>
            <person name="Ellegren H."/>
            <person name="Caldwell R.B."/>
            <person name="Hubbard S.J."/>
            <person name="Grafham D.V."/>
            <person name="Kierzek A.M."/>
            <person name="McLaren S.R."/>
            <person name="Overton I.M."/>
            <person name="Arakawa H."/>
            <person name="Beattie K.J."/>
            <person name="Bezzubov Y."/>
            <person name="Boardman P.E."/>
            <person name="Bonfield J.K."/>
            <person name="Croning M.D.R."/>
            <person name="Davies R.M."/>
            <person name="Francis M.D."/>
            <person name="Humphray S.J."/>
            <person name="Scott C.E."/>
            <person name="Taylor R.G."/>
            <person name="Tickle C."/>
            <person name="Brown W.R.A."/>
            <person name="Rogers J."/>
            <person name="Buerstedde J.-M."/>
            <person name="Wilson S.A."/>
            <person name="Stubbs L."/>
            <person name="Ovcharenko I."/>
            <person name="Gordon L."/>
            <person name="Lucas S."/>
            <person name="Miller M.M."/>
            <person name="Inoko H."/>
            <person name="Shiina T."/>
            <person name="Kaufman J."/>
            <person name="Salomonsen J."/>
            <person name="Skjoedt K."/>
            <person name="Wong G.K.-S."/>
            <person name="Wang J."/>
            <person name="Liu B."/>
            <person name="Wang J."/>
            <person name="Yu J."/>
            <person name="Yang H."/>
            <person name="Nefedov M."/>
            <person name="Koriabine M."/>
            <person name="Dejong P.J."/>
            <person name="Goodstadt L."/>
            <person name="Webber C."/>
            <person name="Dickens N.J."/>
            <person name="Letunic I."/>
            <person name="Suyama M."/>
            <person name="Torrents D."/>
            <person name="von Mering C."/>
            <person name="Zdobnov E.M."/>
            <person name="Makova K."/>
            <person name="Nekrutenko A."/>
            <person name="Elnitski L."/>
            <person name="Eswara P."/>
            <person name="King D.C."/>
            <person name="Yang S.-P."/>
            <person name="Tyekucheva S."/>
            <person name="Radakrishnan A."/>
            <person name="Harris R.S."/>
            <person name="Chiaromonte F."/>
            <person name="Taylor J."/>
            <person name="He J."/>
            <person name="Rijnkels M."/>
            <person name="Griffiths-Jones S."/>
            <person name="Ureta-Vidal A."/>
            <person name="Hoffman M.M."/>
            <person name="Severin J."/>
            <person name="Searle S.M.J."/>
            <person name="Law A.S."/>
            <person name="Speed D."/>
            <person name="Waddington D."/>
            <person name="Cheng Z."/>
            <person name="Tuzun E."/>
            <person name="Eichler E."/>
            <person name="Bao Z."/>
            <person name="Flicek P."/>
            <person name="Shteynberg D.D."/>
            <person name="Brent M.R."/>
            <person name="Bye J.M."/>
            <person name="Huckle E.J."/>
            <person name="Chatterji S."/>
            <person name="Dewey C."/>
            <person name="Pachter L."/>
            <person name="Kouranov A."/>
            <person name="Mourelatos Z."/>
            <person name="Hatzigeorgiou A.G."/>
            <person name="Paterson A.H."/>
            <person name="Ivarie R."/>
            <person name="Brandstrom M."/>
            <person name="Axelsson E."/>
            <person name="Backstrom N."/>
            <person name="Berlin S."/>
            <person name="Webster M.T."/>
            <person name="Pourquie O."/>
            <person name="Reymond A."/>
            <person name="Ucla C."/>
            <person name="Antonarakis S.E."/>
            <person name="Long M."/>
            <person name="Emerson J.J."/>
            <person name="Betran E."/>
            <person name="Dupanloup I."/>
            <person name="Kaessmann H."/>
            <person name="Hinrichs A.S."/>
            <person name="Bejerano G."/>
            <person name="Furey T.S."/>
            <person name="Harte R.A."/>
            <person name="Raney B."/>
            <person name="Siepel A."/>
            <person name="Kent W.J."/>
            <person name="Haussler D."/>
            <person name="Eyras E."/>
            <person name="Castelo R."/>
            <person name="Abril J.F."/>
            <person name="Castellano S."/>
            <person name="Camara F."/>
            <person name="Parra G."/>
            <person name="Guigo R."/>
            <person name="Bourque G."/>
            <person name="Tesler G."/>
            <person name="Pevzner P.A."/>
            <person name="Smit A."/>
            <person name="Fulton L.A."/>
            <person name="Mardis E.R."/>
            <person name="Wilson R.K."/>
        </authorList>
    </citation>
    <scope>NUCLEOTIDE SEQUENCE [LARGE SCALE GENOMIC DNA]</scope>
    <source>
        <strain>Red jungle fowl</strain>
    </source>
</reference>
<protein>
    <recommendedName>
        <fullName evidence="3">Lysosomal amino acid transporter 1 homolog</fullName>
    </recommendedName>
    <alternativeName>
        <fullName>PQ-loop repeat-containing protein 2</fullName>
    </alternativeName>
    <alternativeName>
        <fullName evidence="3">Solute carrier family 66 member 1</fullName>
    </alternativeName>
</protein>
<feature type="chain" id="PRO_0000282436" description="Lysosomal amino acid transporter 1 homolog">
    <location>
        <begin position="1"/>
        <end position="303"/>
    </location>
</feature>
<feature type="topological domain" description="Lumenal" evidence="2">
    <location>
        <begin position="1"/>
        <end position="38"/>
    </location>
</feature>
<feature type="transmembrane region" description="Helical" evidence="2">
    <location>
        <begin position="39"/>
        <end position="59"/>
    </location>
</feature>
<feature type="topological domain" description="Cytoplasmic" evidence="2">
    <location>
        <begin position="60"/>
        <end position="73"/>
    </location>
</feature>
<feature type="transmembrane region" description="Helical" evidence="2">
    <location>
        <begin position="74"/>
        <end position="94"/>
    </location>
</feature>
<feature type="topological domain" description="Lumenal" evidence="2">
    <location>
        <begin position="95"/>
        <end position="96"/>
    </location>
</feature>
<feature type="transmembrane region" description="Helical" evidence="2">
    <location>
        <begin position="97"/>
        <end position="117"/>
    </location>
</feature>
<feature type="topological domain" description="Cytoplasmic" evidence="2">
    <location>
        <begin position="118"/>
        <end position="131"/>
    </location>
</feature>
<feature type="transmembrane region" description="Helical" evidence="2">
    <location>
        <begin position="132"/>
        <end position="152"/>
    </location>
</feature>
<feature type="topological domain" description="Lumenal" evidence="2">
    <location>
        <begin position="153"/>
        <end position="182"/>
    </location>
</feature>
<feature type="transmembrane region" description="Helical" evidence="2">
    <location>
        <begin position="183"/>
        <end position="203"/>
    </location>
</feature>
<feature type="topological domain" description="Cytoplasmic" evidence="2">
    <location>
        <begin position="204"/>
        <end position="220"/>
    </location>
</feature>
<feature type="transmembrane region" description="Helical" evidence="2">
    <location>
        <begin position="221"/>
        <end position="241"/>
    </location>
</feature>
<feature type="topological domain" description="Lumenal" evidence="2">
    <location>
        <begin position="242"/>
        <end position="260"/>
    </location>
</feature>
<feature type="transmembrane region" description="Helical" evidence="2">
    <location>
        <begin position="261"/>
        <end position="281"/>
    </location>
</feature>
<feature type="topological domain" description="Cytoplasmic" evidence="2">
    <location>
        <begin position="282"/>
        <end position="303"/>
    </location>
</feature>
<feature type="domain" description="PQ-loop 1">
    <location>
        <begin position="36"/>
        <end position="102"/>
    </location>
</feature>
<feature type="domain" description="PQ-loop 2">
    <location>
        <begin position="186"/>
        <end position="251"/>
    </location>
</feature>
<feature type="short sequence motif" description="Di-leucine motif">
    <location>
        <begin position="296"/>
        <end position="297"/>
    </location>
</feature>
<feature type="glycosylation site" description="N-linked (GlcNAc...) asparagine" evidence="2">
    <location>
        <position position="13"/>
    </location>
</feature>